<dbReference type="EC" id="1.2.1.70" evidence="1"/>
<dbReference type="EMBL" id="CP001108">
    <property type="protein sequence ID" value="ACF46558.1"/>
    <property type="molecule type" value="Genomic_DNA"/>
</dbReference>
<dbReference type="RefSeq" id="WP_012506091.1">
    <property type="nucleotide sequence ID" value="NC_011059.1"/>
</dbReference>
<dbReference type="SMR" id="B4S921"/>
<dbReference type="STRING" id="290512.Paes_1538"/>
<dbReference type="KEGG" id="paa:Paes_1538"/>
<dbReference type="eggNOG" id="COG0373">
    <property type="taxonomic scope" value="Bacteria"/>
</dbReference>
<dbReference type="HOGENOM" id="CLU_035113_2_2_10"/>
<dbReference type="UniPathway" id="UPA00251">
    <property type="reaction ID" value="UER00316"/>
</dbReference>
<dbReference type="UniPathway" id="UPA00668"/>
<dbReference type="Proteomes" id="UP000002725">
    <property type="component" value="Chromosome"/>
</dbReference>
<dbReference type="GO" id="GO:0008883">
    <property type="term" value="F:glutamyl-tRNA reductase activity"/>
    <property type="evidence" value="ECO:0007669"/>
    <property type="project" value="UniProtKB-UniRule"/>
</dbReference>
<dbReference type="GO" id="GO:0050661">
    <property type="term" value="F:NADP binding"/>
    <property type="evidence" value="ECO:0007669"/>
    <property type="project" value="InterPro"/>
</dbReference>
<dbReference type="GO" id="GO:0015995">
    <property type="term" value="P:chlorophyll biosynthetic process"/>
    <property type="evidence" value="ECO:0007669"/>
    <property type="project" value="UniProtKB-UniRule"/>
</dbReference>
<dbReference type="GO" id="GO:0019353">
    <property type="term" value="P:protoporphyrinogen IX biosynthetic process from glutamate"/>
    <property type="evidence" value="ECO:0007669"/>
    <property type="project" value="TreeGrafter"/>
</dbReference>
<dbReference type="CDD" id="cd05213">
    <property type="entry name" value="NAD_bind_Glutamyl_tRNA_reduct"/>
    <property type="match status" value="1"/>
</dbReference>
<dbReference type="FunFam" id="3.30.460.30:FF:000001">
    <property type="entry name" value="Glutamyl-tRNA reductase"/>
    <property type="match status" value="1"/>
</dbReference>
<dbReference type="FunFam" id="3.40.50.720:FF:000031">
    <property type="entry name" value="Glutamyl-tRNA reductase"/>
    <property type="match status" value="1"/>
</dbReference>
<dbReference type="Gene3D" id="3.30.460.30">
    <property type="entry name" value="Glutamyl-tRNA reductase, N-terminal domain"/>
    <property type="match status" value="1"/>
</dbReference>
<dbReference type="Gene3D" id="3.40.50.720">
    <property type="entry name" value="NAD(P)-binding Rossmann-like Domain"/>
    <property type="match status" value="1"/>
</dbReference>
<dbReference type="HAMAP" id="MF_00087">
    <property type="entry name" value="Glu_tRNA_reductase"/>
    <property type="match status" value="1"/>
</dbReference>
<dbReference type="InterPro" id="IPR000343">
    <property type="entry name" value="4pyrrol_synth_GluRdtase"/>
</dbReference>
<dbReference type="InterPro" id="IPR015896">
    <property type="entry name" value="4pyrrol_synth_GluRdtase_dimer"/>
</dbReference>
<dbReference type="InterPro" id="IPR015895">
    <property type="entry name" value="4pyrrol_synth_GluRdtase_N"/>
</dbReference>
<dbReference type="InterPro" id="IPR036453">
    <property type="entry name" value="GluRdtase_dimer_dom_sf"/>
</dbReference>
<dbReference type="InterPro" id="IPR036343">
    <property type="entry name" value="GluRdtase_N_sf"/>
</dbReference>
<dbReference type="InterPro" id="IPR036291">
    <property type="entry name" value="NAD(P)-bd_dom_sf"/>
</dbReference>
<dbReference type="InterPro" id="IPR006151">
    <property type="entry name" value="Shikm_DH/Glu-tRNA_Rdtase"/>
</dbReference>
<dbReference type="NCBIfam" id="TIGR01035">
    <property type="entry name" value="hemA"/>
    <property type="match status" value="1"/>
</dbReference>
<dbReference type="PANTHER" id="PTHR43013">
    <property type="entry name" value="GLUTAMYL-TRNA REDUCTASE"/>
    <property type="match status" value="1"/>
</dbReference>
<dbReference type="PANTHER" id="PTHR43013:SF1">
    <property type="entry name" value="GLUTAMYL-TRNA REDUCTASE"/>
    <property type="match status" value="1"/>
</dbReference>
<dbReference type="Pfam" id="PF00745">
    <property type="entry name" value="GlutR_dimer"/>
    <property type="match status" value="1"/>
</dbReference>
<dbReference type="Pfam" id="PF05201">
    <property type="entry name" value="GlutR_N"/>
    <property type="match status" value="1"/>
</dbReference>
<dbReference type="Pfam" id="PF01488">
    <property type="entry name" value="Shikimate_DH"/>
    <property type="match status" value="1"/>
</dbReference>
<dbReference type="PIRSF" id="PIRSF000445">
    <property type="entry name" value="4pyrrol_synth_GluRdtase"/>
    <property type="match status" value="1"/>
</dbReference>
<dbReference type="SUPFAM" id="SSF69742">
    <property type="entry name" value="Glutamyl tRNA-reductase catalytic, N-terminal domain"/>
    <property type="match status" value="1"/>
</dbReference>
<dbReference type="SUPFAM" id="SSF69075">
    <property type="entry name" value="Glutamyl tRNA-reductase dimerization domain"/>
    <property type="match status" value="1"/>
</dbReference>
<dbReference type="SUPFAM" id="SSF51735">
    <property type="entry name" value="NAD(P)-binding Rossmann-fold domains"/>
    <property type="match status" value="1"/>
</dbReference>
<name>HEM1_PROA2</name>
<organism>
    <name type="scientific">Prosthecochloris aestuarii (strain DSM 271 / SK 413)</name>
    <dbReference type="NCBI Taxonomy" id="290512"/>
    <lineage>
        <taxon>Bacteria</taxon>
        <taxon>Pseudomonadati</taxon>
        <taxon>Chlorobiota</taxon>
        <taxon>Chlorobiia</taxon>
        <taxon>Chlorobiales</taxon>
        <taxon>Chlorobiaceae</taxon>
        <taxon>Prosthecochloris</taxon>
    </lineage>
</organism>
<protein>
    <recommendedName>
        <fullName evidence="1">Glutamyl-tRNA reductase</fullName>
        <shortName evidence="1">GluTR</shortName>
        <ecNumber evidence="1">1.2.1.70</ecNumber>
    </recommendedName>
</protein>
<sequence length="426" mass="48734">MNIISVGVNHKTAPIEIRERISLSEVQAKEFLSDIISSGIAQEAMVLSTCNRTELYVVPGMSEVTGHYLKEYLISYKNAEKEVRPEHFFNRFYCNTARHLFEVSSATDSLVLGEGQILGQVKNAYRIAVEEQSAGILLTRLCHTAFSVAKKVKTRTRIMEGAVSVSYAAVELAQKIFSNLSMKKILLVGAGETGELAAKHMFQKNARNIVITNRTMSKAEALAEELGTNQVLPFETFRDNLHEFDIIITAVSTKDYVLKAPDMHQSMQKRRLKPVIILDLGLPRNVDPEIRSLQNMFLKDIDDLKHIIDKNLEMRRSELPKVQEIIDEELVGFGQWINTLKVRPTIVDLQSKFLEIKEKELERYRHKVSDEELRRMERLSDRILKKILHHPIKMLKSPVDTADNIPSKVNLVRNIFDLEEQNQLKQ</sequence>
<reference key="1">
    <citation type="submission" date="2008-06" db="EMBL/GenBank/DDBJ databases">
        <title>Complete sequence of chromosome of Prosthecochloris aestuarii DSM 271.</title>
        <authorList>
            <consortium name="US DOE Joint Genome Institute"/>
            <person name="Lucas S."/>
            <person name="Copeland A."/>
            <person name="Lapidus A."/>
            <person name="Glavina del Rio T."/>
            <person name="Dalin E."/>
            <person name="Tice H."/>
            <person name="Bruce D."/>
            <person name="Goodwin L."/>
            <person name="Pitluck S."/>
            <person name="Schmutz J."/>
            <person name="Larimer F."/>
            <person name="Land M."/>
            <person name="Hauser L."/>
            <person name="Kyrpides N."/>
            <person name="Anderson I."/>
            <person name="Liu Z."/>
            <person name="Li T."/>
            <person name="Zhao F."/>
            <person name="Overmann J."/>
            <person name="Bryant D.A."/>
            <person name="Richardson P."/>
        </authorList>
    </citation>
    <scope>NUCLEOTIDE SEQUENCE [LARGE SCALE GENOMIC DNA]</scope>
    <source>
        <strain>DSM 271 / SK 413</strain>
    </source>
</reference>
<comment type="function">
    <text evidence="1">Catalyzes the NADPH-dependent reduction of glutamyl-tRNA(Glu) to glutamate 1-semialdehyde (GSA).</text>
</comment>
<comment type="catalytic activity">
    <reaction evidence="1">
        <text>(S)-4-amino-5-oxopentanoate + tRNA(Glu) + NADP(+) = L-glutamyl-tRNA(Glu) + NADPH + H(+)</text>
        <dbReference type="Rhea" id="RHEA:12344"/>
        <dbReference type="Rhea" id="RHEA-COMP:9663"/>
        <dbReference type="Rhea" id="RHEA-COMP:9680"/>
        <dbReference type="ChEBI" id="CHEBI:15378"/>
        <dbReference type="ChEBI" id="CHEBI:57501"/>
        <dbReference type="ChEBI" id="CHEBI:57783"/>
        <dbReference type="ChEBI" id="CHEBI:58349"/>
        <dbReference type="ChEBI" id="CHEBI:78442"/>
        <dbReference type="ChEBI" id="CHEBI:78520"/>
        <dbReference type="EC" id="1.2.1.70"/>
    </reaction>
</comment>
<comment type="pathway">
    <text evidence="1">Porphyrin-containing compound metabolism; protoporphyrin-IX biosynthesis; 5-aminolevulinate from L-glutamyl-tRNA(Glu): step 1/2.</text>
</comment>
<comment type="pathway">
    <text evidence="1">Porphyrin-containing compound metabolism; chlorophyll biosynthesis.</text>
</comment>
<comment type="subunit">
    <text evidence="1">Homodimer.</text>
</comment>
<comment type="domain">
    <text evidence="1">Possesses an unusual extended V-shaped dimeric structure with each monomer consisting of three distinct domains arranged along a curved 'spinal' alpha-helix. The N-terminal catalytic domain specifically recognizes the glutamate moiety of the substrate. The second domain is the NADPH-binding domain, and the third C-terminal domain is responsible for dimerization.</text>
</comment>
<comment type="miscellaneous">
    <text evidence="1">During catalysis, the active site Cys acts as a nucleophile attacking the alpha-carbonyl group of tRNA-bound glutamate with the formation of a thioester intermediate between enzyme and glutamate, and the concomitant release of tRNA(Glu). The thioester intermediate is finally reduced by direct hydride transfer from NADPH, to form the product GSA.</text>
</comment>
<comment type="similarity">
    <text evidence="1">Belongs to the glutamyl-tRNA reductase family.</text>
</comment>
<evidence type="ECO:0000255" key="1">
    <source>
        <dbReference type="HAMAP-Rule" id="MF_00087"/>
    </source>
</evidence>
<gene>
    <name evidence="1" type="primary">hemA</name>
    <name type="ordered locus">Paes_1538</name>
</gene>
<proteinExistence type="inferred from homology"/>
<keyword id="KW-0149">Chlorophyll biosynthesis</keyword>
<keyword id="KW-0521">NADP</keyword>
<keyword id="KW-0560">Oxidoreductase</keyword>
<keyword id="KW-0627">Porphyrin biosynthesis</keyword>
<feature type="chain" id="PRO_1000093157" description="Glutamyl-tRNA reductase">
    <location>
        <begin position="1"/>
        <end position="426"/>
    </location>
</feature>
<feature type="active site" description="Nucleophile" evidence="1">
    <location>
        <position position="50"/>
    </location>
</feature>
<feature type="binding site" evidence="1">
    <location>
        <begin position="49"/>
        <end position="52"/>
    </location>
    <ligand>
        <name>substrate</name>
    </ligand>
</feature>
<feature type="binding site" evidence="1">
    <location>
        <position position="109"/>
    </location>
    <ligand>
        <name>substrate</name>
    </ligand>
</feature>
<feature type="binding site" evidence="1">
    <location>
        <begin position="114"/>
        <end position="116"/>
    </location>
    <ligand>
        <name>substrate</name>
    </ligand>
</feature>
<feature type="binding site" evidence="1">
    <location>
        <position position="120"/>
    </location>
    <ligand>
        <name>substrate</name>
    </ligand>
</feature>
<feature type="binding site" evidence="1">
    <location>
        <begin position="189"/>
        <end position="194"/>
    </location>
    <ligand>
        <name>NADP(+)</name>
        <dbReference type="ChEBI" id="CHEBI:58349"/>
    </ligand>
</feature>
<feature type="site" description="Important for activity" evidence="1">
    <location>
        <position position="99"/>
    </location>
</feature>
<accession>B4S921</accession>